<sequence>MNKIPIKDLLNPQITDEFKSSILDINKKLFSICCNLPKLPESVTTEEEVELRDILGFLSRANKNRKISDEEKKLLQTTSQLTTTITVLLKEMRSIENDRSNYQLTQKNKSADGLVFNVVTQDMINKSTKPYRGHRFTKENVRILESWFAKNIENPYLDTKGLENLMKNTSLSRIQIKNWVSNRRRKEKTITIAPELADLLSGEPLAKKKE</sequence>
<name>MTAL2_YEAST</name>
<proteinExistence type="evidence at protein level"/>
<accession>P0CY08</accession>
<accession>D6VQV2</accession>
<accession>P01367</accession>
<accession>P01368</accession>
<accession>Q6B2C0</accession>
<feature type="chain" id="PRO_0000049186" description="Mating-type protein ALPHA2">
    <location>
        <begin position="1"/>
        <end position="210"/>
    </location>
</feature>
<feature type="DNA-binding region" description="Homeobox; TALE-type" evidence="1">
    <location>
        <begin position="129"/>
        <end position="191"/>
    </location>
</feature>
<feature type="region of interest" description="N-terminal domain">
    <location>
        <begin position="1"/>
        <end position="102"/>
    </location>
</feature>
<feature type="region of interest" description="Flexible linker">
    <location>
        <begin position="103"/>
        <end position="128"/>
    </location>
</feature>
<feature type="region of interest" description="C-terminal tail">
    <location>
        <begin position="190"/>
        <end position="210"/>
    </location>
</feature>
<feature type="modified residue" description="N-acetylmethionine" evidence="4">
    <location>
        <position position="1"/>
    </location>
</feature>
<feature type="mutagenesis site" description="Reduces the ability of ALPHA2 to repress transcription, but binds normally to DNA and MCM1." evidence="10">
    <original>I</original>
    <variation>T</variation>
    <location>
        <position position="4"/>
    </location>
</feature>
<feature type="mutagenesis site" description="Reduces the ability of ALPHA2 to repress transcription, but binds normally to DNA and MCM1." evidence="10">
    <original>L</original>
    <variation>F</variation>
    <location>
        <position position="9"/>
    </location>
</feature>
<feature type="mutagenesis site" description="Reduces the ability of ALPHA2 to repress transcription, but binds normally to DNA and MCM1. Disrupts interaction with TUP1." evidence="10">
    <original>L</original>
    <variation>S</variation>
    <location>
        <position position="10"/>
    </location>
</feature>
<feature type="mutagenesis site" description="Reduces the ability of alpha2 to repress transcription, but binds normally to DNA and MCM1." evidence="10">
    <original>E</original>
    <variation>K</variation>
    <location>
        <position position="71"/>
    </location>
</feature>
<feature type="mutagenesis site" description="Reduces the ability of ALPHA2/MCM1 to repress a-specific genes." evidence="6">
    <original>L</original>
    <variation>A</variation>
    <location>
        <position position="114"/>
    </location>
</feature>
<feature type="mutagenesis site" description="Reduces the ability of ALPHA2/MCM1 to repress a-specific genes." evidence="6">
    <original>V</original>
    <variation>A</variation>
    <location>
        <position position="115"/>
    </location>
</feature>
<feature type="mutagenesis site" description="Reduces the ability of ALPHA2/MCM1 to repress a-specific genes." evidence="6">
    <original>F</original>
    <variation>A</variation>
    <location>
        <position position="116"/>
    </location>
</feature>
<feature type="mutagenesis site" description="Reduces the ability of ALPHA2/MCM1 to repress a-specific genes." evidence="6">
    <original>N</original>
    <variation>A</variation>
    <location>
        <position position="117"/>
    </location>
</feature>
<feature type="mutagenesis site" description="Reduces the ability of ALPHA2/MCM1 to repress a-specific genes." evidence="6">
    <original>V</original>
    <variation>A</variation>
    <location>
        <position position="118"/>
    </location>
</feature>
<feature type="mutagenesis site" description="Reduces the ability of ALPHA2/MCM1 to repress a-specific genes." evidence="6">
    <original>V</original>
    <variation>A</variation>
    <location>
        <position position="119"/>
    </location>
</feature>
<feature type="mutagenesis site" description="Reduces the ability of ALPHA2/MCM1 to repress a-specific genes." evidence="6">
    <original>T</original>
    <variation>A</variation>
    <location>
        <position position="120"/>
    </location>
</feature>
<feature type="mutagenesis site" description="Reduces the ability of ALPHA2/MCM1 to repress a-specific genes. Disrupts interaction with SSN6." evidence="2">
    <original>R</original>
    <variation>A</variation>
    <location>
        <position position="173"/>
    </location>
</feature>
<feature type="mutagenesis site" description="In ALPHA2-3A; defective in binding DNA alone or in complex with MCM1, but binds DNA normally in complex with A1; when associated with A-182 and A-185." evidence="3">
    <original>S</original>
    <variation>A</variation>
    <location>
        <position position="181"/>
    </location>
</feature>
<feature type="mutagenesis site" description="In ALPHA2-3A; defective in binding DNA alone or in complex with MCM1, but binds DNA normally in complex with A1; when associated with A-181 and A-185." evidence="3">
    <original>N</original>
    <variation>A</variation>
    <location>
        <position position="182"/>
    </location>
</feature>
<feature type="mutagenesis site" description="In ALPHA2-3A; defective in binding DNA alone or in complex with MCM1, but binds DNA normally in complex with A1; when associated with A-181 and A-182." evidence="3">
    <original>R</original>
    <variation>A</variation>
    <location>
        <position position="185"/>
    </location>
</feature>
<feature type="mutagenesis site" description="Disrupts the ability of A1/ALPHA2 to repress haploid-specific genes." evidence="9">
    <original>I</original>
    <variation>A</variation>
    <location>
        <position position="192"/>
    </location>
</feature>
<feature type="mutagenesis site" description="Disrupts the ability of A1/ALPHA2 to repress haploid-specific genes." evidence="5 9">
    <original>L</original>
    <variation>A</variation>
    <variation>S</variation>
    <location>
        <position position="196"/>
    </location>
</feature>
<feature type="mutagenesis site" description="Disrupts the ability of A1/ALPHA2 to repress haploid-specific genes." evidence="9">
    <original>L</original>
    <variation>A</variation>
    <location>
        <position position="199"/>
    </location>
</feature>
<feature type="mutagenesis site" description="Disrupts the ability of A1/ALPHA2 to repress haploid-specific genes." evidence="9">
    <original>L</original>
    <variation>A</variation>
    <location>
        <position position="200"/>
    </location>
</feature>
<feature type="sequence conflict" description="In Ref. 1; AAA34762." evidence="15" ref="1">
    <original>G</original>
    <variation>L</variation>
    <location>
        <position position="56"/>
    </location>
</feature>
<feature type="sequence conflict" description="In Ref. 1; AAA34762." evidence="15" ref="1">
    <original>K</original>
    <variation>KK</variation>
    <location>
        <position position="150"/>
    </location>
</feature>
<feature type="sequence conflict" description="In Ref. 5; AAT92829." evidence="15" ref="5">
    <original>N</original>
    <variation>S</variation>
    <location>
        <position position="154"/>
    </location>
</feature>
<feature type="strand" evidence="18">
    <location>
        <begin position="116"/>
        <end position="120"/>
    </location>
</feature>
<feature type="strand" evidence="18">
    <location>
        <begin position="125"/>
        <end position="129"/>
    </location>
</feature>
<feature type="helix" evidence="16">
    <location>
        <begin position="138"/>
        <end position="150"/>
    </location>
</feature>
<feature type="turn" evidence="16">
    <location>
        <begin position="151"/>
        <end position="153"/>
    </location>
</feature>
<feature type="helix" evidence="16">
    <location>
        <begin position="159"/>
        <end position="169"/>
    </location>
</feature>
<feature type="helix" evidence="16">
    <location>
        <begin position="173"/>
        <end position="188"/>
    </location>
</feature>
<feature type="helix" evidence="17">
    <location>
        <begin position="194"/>
        <end position="197"/>
    </location>
</feature>
<feature type="strand" evidence="17">
    <location>
        <begin position="200"/>
        <end position="202"/>
    </location>
</feature>
<protein>
    <recommendedName>
        <fullName>Mating-type protein ALPHA2</fullName>
        <shortName>MATalpha2 protein</shortName>
    </recommendedName>
    <alternativeName>
        <fullName>Alpha-2 repressor</fullName>
    </alternativeName>
</protein>
<keyword id="KW-0002">3D-structure</keyword>
<keyword id="KW-0007">Acetylation</keyword>
<keyword id="KW-0903">Direct protein sequencing</keyword>
<keyword id="KW-0238">DNA-binding</keyword>
<keyword id="KW-0371">Homeobox</keyword>
<keyword id="KW-0539">Nucleus</keyword>
<keyword id="KW-1185">Reference proteome</keyword>
<keyword id="KW-0678">Repressor</keyword>
<keyword id="KW-0804">Transcription</keyword>
<keyword id="KW-0805">Transcription regulation</keyword>
<reference key="1">
    <citation type="journal article" date="1981" name="Cold Spring Harb. Symp. Quant. Biol.">
        <title>Physical analysis of mating-type loci in Saccharomyces cerevisiae.</title>
        <authorList>
            <person name="Nasmyth K.A."/>
            <person name="Tatchell K."/>
            <person name="Hall B.D."/>
            <person name="Astell C."/>
            <person name="Smith M."/>
        </authorList>
    </citation>
    <scope>NUCLEOTIDE SEQUENCE [GENOMIC DNA]</scope>
</reference>
<reference key="2">
    <citation type="journal article" date="1991" name="Yeast">
        <title>The MAT locus revisited within a 9.8 kb fragment of chromosome III containing BUD5 and two new open reading frames.</title>
        <authorList>
            <person name="Jacquet M."/>
            <person name="Buhler J.-M."/>
            <person name="Iborra F."/>
            <person name="Francingues-Gaillard M.-C."/>
            <person name="Soustelle C."/>
        </authorList>
    </citation>
    <scope>NUCLEOTIDE SEQUENCE [GENOMIC DNA]</scope>
</reference>
<reference key="3">
    <citation type="journal article" date="1992" name="Nature">
        <title>The complete DNA sequence of yeast chromosome III.</title>
        <authorList>
            <person name="Oliver S.G."/>
            <person name="van der Aart Q.J.M."/>
            <person name="Agostoni-Carbone M.L."/>
            <person name="Aigle M."/>
            <person name="Alberghina L."/>
            <person name="Alexandraki D."/>
            <person name="Antoine G."/>
            <person name="Anwar R."/>
            <person name="Ballesta J.P.G."/>
            <person name="Benit P."/>
            <person name="Berben G."/>
            <person name="Bergantino E."/>
            <person name="Biteau N."/>
            <person name="Bolle P.-A."/>
            <person name="Bolotin-Fukuhara M."/>
            <person name="Brown A."/>
            <person name="Brown A.J.P."/>
            <person name="Buhler J.-M."/>
            <person name="Carcano C."/>
            <person name="Carignani G."/>
            <person name="Cederberg H."/>
            <person name="Chanet R."/>
            <person name="Contreras R."/>
            <person name="Crouzet M."/>
            <person name="Daignan-Fornier B."/>
            <person name="Defoor E."/>
            <person name="Delgado M.D."/>
            <person name="Demolder J."/>
            <person name="Doira C."/>
            <person name="Dubois E."/>
            <person name="Dujon B."/>
            <person name="Duesterhoeft A."/>
            <person name="Erdmann D."/>
            <person name="Esteban M."/>
            <person name="Fabre F."/>
            <person name="Fairhead C."/>
            <person name="Faye G."/>
            <person name="Feldmann H."/>
            <person name="Fiers W."/>
            <person name="Francingues-Gaillard M.-C."/>
            <person name="Franco L."/>
            <person name="Frontali L."/>
            <person name="Fukuhara H."/>
            <person name="Fuller L.J."/>
            <person name="Galland P."/>
            <person name="Gent M.E."/>
            <person name="Gigot D."/>
            <person name="Gilliquet V."/>
            <person name="Glansdorff N."/>
            <person name="Goffeau A."/>
            <person name="Grenson M."/>
            <person name="Grisanti P."/>
            <person name="Grivell L.A."/>
            <person name="de Haan M."/>
            <person name="Haasemann M."/>
            <person name="Hatat D."/>
            <person name="Hoenicka J."/>
            <person name="Hegemann J.H."/>
            <person name="Herbert C.J."/>
            <person name="Hilger F."/>
            <person name="Hohmann S."/>
            <person name="Hollenberg C.P."/>
            <person name="Huse K."/>
            <person name="Iborra F."/>
            <person name="Indge K.J."/>
            <person name="Isono K."/>
            <person name="Jacq C."/>
            <person name="Jacquet M."/>
            <person name="James C.M."/>
            <person name="Jauniaux J.-C."/>
            <person name="Jia Y."/>
            <person name="Jimenez A."/>
            <person name="Kelly A."/>
            <person name="Kleinhans U."/>
            <person name="Kreisl P."/>
            <person name="Lanfranchi G."/>
            <person name="Lewis C."/>
            <person name="van der Linden C.G."/>
            <person name="Lucchini G."/>
            <person name="Lutzenkirchen K."/>
            <person name="Maat M.J."/>
            <person name="Mallet L."/>
            <person name="Mannhaupt G."/>
            <person name="Martegani E."/>
            <person name="Mathieu A."/>
            <person name="Maurer C.T.C."/>
            <person name="McConnell D."/>
            <person name="McKee R.A."/>
            <person name="Messenguy F."/>
            <person name="Mewes H.-W."/>
            <person name="Molemans F."/>
            <person name="Montague M.A."/>
            <person name="Muzi Falconi M."/>
            <person name="Navas L."/>
            <person name="Newlon C.S."/>
            <person name="Noone D."/>
            <person name="Pallier C."/>
            <person name="Panzeri L."/>
            <person name="Pearson B.M."/>
            <person name="Perea J."/>
            <person name="Philippsen P."/>
            <person name="Pierard A."/>
            <person name="Planta R.J."/>
            <person name="Plevani P."/>
            <person name="Poetsch B."/>
            <person name="Pohl F.M."/>
            <person name="Purnelle B."/>
            <person name="Ramezani Rad M."/>
            <person name="Rasmussen S.W."/>
            <person name="Raynal A."/>
            <person name="Remacha M.A."/>
            <person name="Richterich P."/>
            <person name="Roberts A.B."/>
            <person name="Rodriguez F."/>
            <person name="Sanz E."/>
            <person name="Schaaff-Gerstenschlaeger I."/>
            <person name="Scherens B."/>
            <person name="Schweitzer B."/>
            <person name="Shu Y."/>
            <person name="Skala J."/>
            <person name="Slonimski P.P."/>
            <person name="Sor F."/>
            <person name="Soustelle C."/>
            <person name="Spiegelberg R."/>
            <person name="Stateva L.I."/>
            <person name="Steensma H.Y."/>
            <person name="Steiner S."/>
            <person name="Thierry A."/>
            <person name="Thireos G."/>
            <person name="Tzermia M."/>
            <person name="Urrestarazu L.A."/>
            <person name="Valle G."/>
            <person name="Vetter I."/>
            <person name="van Vliet-Reedijk J.C."/>
            <person name="Voet M."/>
            <person name="Volckaert G."/>
            <person name="Vreken P."/>
            <person name="Wang H."/>
            <person name="Warmington J.R."/>
            <person name="von Wettstein D."/>
            <person name="Wicksteed B.L."/>
            <person name="Wilson C."/>
            <person name="Wurst H."/>
            <person name="Xu G."/>
            <person name="Yoshikawa A."/>
            <person name="Zimmermann F.K."/>
            <person name="Sgouros J.G."/>
        </authorList>
    </citation>
    <scope>NUCLEOTIDE SEQUENCE [LARGE SCALE GENOMIC DNA]</scope>
    <source>
        <strain>ATCC 204508 / S288c</strain>
    </source>
</reference>
<reference key="4">
    <citation type="journal article" date="2014" name="G3 (Bethesda)">
        <title>The reference genome sequence of Saccharomyces cerevisiae: Then and now.</title>
        <authorList>
            <person name="Engel S.R."/>
            <person name="Dietrich F.S."/>
            <person name="Fisk D.G."/>
            <person name="Binkley G."/>
            <person name="Balakrishnan R."/>
            <person name="Costanzo M.C."/>
            <person name="Dwight S.S."/>
            <person name="Hitz B.C."/>
            <person name="Karra K."/>
            <person name="Nash R.S."/>
            <person name="Weng S."/>
            <person name="Wong E.D."/>
            <person name="Lloyd P."/>
            <person name="Skrzypek M.S."/>
            <person name="Miyasato S.R."/>
            <person name="Simison M."/>
            <person name="Cherry J.M."/>
        </authorList>
    </citation>
    <scope>GENOME REANNOTATION</scope>
    <source>
        <strain>ATCC 204508 / S288c</strain>
    </source>
</reference>
<reference key="5">
    <citation type="journal article" date="2007" name="Genome Res.">
        <title>Approaching a complete repository of sequence-verified protein-encoding clones for Saccharomyces cerevisiae.</title>
        <authorList>
            <person name="Hu Y."/>
            <person name="Rolfs A."/>
            <person name="Bhullar B."/>
            <person name="Murthy T.V.S."/>
            <person name="Zhu C."/>
            <person name="Berger M.F."/>
            <person name="Camargo A.A."/>
            <person name="Kelley F."/>
            <person name="McCarron S."/>
            <person name="Jepson D."/>
            <person name="Richardson A."/>
            <person name="Raphael J."/>
            <person name="Moreira D."/>
            <person name="Taycher E."/>
            <person name="Zuo D."/>
            <person name="Mohr S."/>
            <person name="Kane M.F."/>
            <person name="Williamson J."/>
            <person name="Simpson A.J.G."/>
            <person name="Bulyk M.L."/>
            <person name="Harlow E."/>
            <person name="Marsischky G."/>
            <person name="Kolodner R.D."/>
            <person name="LaBaer J."/>
        </authorList>
    </citation>
    <scope>NUCLEOTIDE SEQUENCE [GENOMIC DNA]</scope>
    <source>
        <strain>ATCC 204508 / S288c</strain>
    </source>
</reference>
<reference key="6">
    <citation type="journal article" date="1985" name="Cell">
        <title>A repressor (MAT alpha 2 Product) and its operator control expression of a set of cell type specific genes in yeast.</title>
        <authorList>
            <person name="Johnson A.D."/>
            <person name="Herskowitz I."/>
        </authorList>
    </citation>
    <scope>DNA-BINDING SPECIFICITY</scope>
</reference>
<reference key="7">
    <citation type="journal article" date="1987" name="Science">
        <title>Homeo domain of the yeast repressor alpha 2 is a sequence-specific DNA-binding domain but is not sufficient for repression.</title>
        <authorList>
            <person name="Hall M.N."/>
            <person name="Johnson A.D."/>
        </authorList>
    </citation>
    <scope>MUTAGENESIS BY DOMAIN DELETION</scope>
</reference>
<reference key="8">
    <citation type="journal article" date="1988" name="Genes Dev.">
        <title>Flexibility of the yeast alpha 2 repressor enables it to occupy the ends of its operator, leaving the center free.</title>
        <authorList>
            <person name="Sauer R.T."/>
            <person name="Smith D.L."/>
            <person name="Johnson A.D."/>
        </authorList>
    </citation>
    <scope>DOMAINS</scope>
    <scope>DIMERIZATION</scope>
</reference>
<reference key="9">
    <citation type="journal article" date="1988" name="Genetics">
        <title>a/Alpha-specific repression by MAT alpha 2.</title>
        <authorList>
            <person name="Strathern J."/>
            <person name="Shafer B."/>
            <person name="Hicks J."/>
            <person name="McGill C."/>
        </authorList>
    </citation>
    <scope>MUTAGENESIS OF LEU-196</scope>
</reference>
<reference key="10">
    <citation type="journal article" date="2010" name="Science">
        <title>N-terminal acetylation of cellular proteins creates specific degradation signals.</title>
        <authorList>
            <person name="Hwang C.S."/>
            <person name="Shemorry A."/>
            <person name="Varshavsky A."/>
        </authorList>
    </citation>
    <scope>PROTEIN SEQUENCE OF 1-7</scope>
    <scope>ACETYLATION AT MET-1</scope>
</reference>
<reference key="11">
    <citation type="journal article" date="1984" name="Nature">
        <title>Fly and frog homoeo domains show homologies with yeast mating type regulatory proteins.</title>
        <authorList>
            <person name="Shepherd J.C.W."/>
            <person name="McGinnis W."/>
            <person name="Carrasco A.E."/>
            <person name="De Robertis E.M."/>
            <person name="Gehring W.J."/>
        </authorList>
    </citation>
    <scope>SIMILARITY TO HOMEOBOX PROTEINS</scope>
</reference>
<reference key="12">
    <citation type="journal article" date="1994" name="Genes Dev.">
        <title>The WD repeats of Tup1 interact with the homeo domain protein alpha 2.</title>
        <authorList>
            <person name="Komachi K."/>
            <person name="Redd M.J."/>
            <person name="Johnson A.D."/>
        </authorList>
    </citation>
    <scope>INTERACTION WITH TUP1</scope>
    <scope>MUTAGENESIS OF ILE-4; LEU-9; LEU-10 AND GLU-71</scope>
</reference>
<reference key="13">
    <citation type="journal article" date="1995" name="Curr. Opin. Genet. Dev.">
        <title>Molecular mechanisms of cell-type determination in budding yeast.</title>
        <authorList>
            <person name="Johnson A.D."/>
        </authorList>
    </citation>
    <scope>FUNCTION IN MATING-TYPE REGULATION</scope>
</reference>
<reference key="14">
    <citation type="journal article" date="1995" name="Genes Dev.">
        <title>The tetratricopeptide repeats of Ssn6 interact with the homeo domain of alpha 2.</title>
        <authorList>
            <person name="Smith R.L."/>
            <person name="Redd M.J."/>
            <person name="Johnson A.D."/>
        </authorList>
    </citation>
    <scope>INTERACTION WITH SSN6</scope>
</reference>
<reference key="15">
    <citation type="journal article" date="1996" name="Mol. Cell. Biol.">
        <title>The yeast alpha2 and Mcm1 proteins interact through a region similar to a motif found in homeodomain proteins of higher eukaryotes.</title>
        <authorList>
            <person name="Mead J."/>
            <person name="Zhong H."/>
            <person name="Acton T.B."/>
            <person name="Vershon A.K."/>
        </authorList>
    </citation>
    <scope>INTERACTION WITH MCM1</scope>
    <scope>MUTAGENESIS OF 114-LEU--THR-120</scope>
</reference>
<reference key="16">
    <citation type="journal article" date="2000" name="Proc. Natl. Acad. Sci. U.S.A.">
        <title>A sequence resembling a peroxisomal targeting sequence directs the interaction between the tetratricopeptide repeats of Ssn6 and the homeodomain of alpha 2.</title>
        <authorList>
            <person name="Smith R.L."/>
            <person name="Johnson A.D."/>
        </authorList>
    </citation>
    <scope>INTERACTION WITH SSN6</scope>
    <scope>MUTAGENESIS OF ARG-173</scope>
</reference>
<reference key="17">
    <citation type="journal article" date="1991" name="Cell">
        <title>Crystal structure of a MAT alpha 2 homeodomain-operator complex suggests a general model for homeodomain-DNA interactions.</title>
        <authorList>
            <person name="Wolberger C."/>
            <person name="Vershon A.K."/>
            <person name="Liu B."/>
            <person name="Johnson A.D."/>
            <person name="Pabo C.O."/>
        </authorList>
    </citation>
    <scope>X-RAY CRYSTALLOGRAPHY (2.7 ANGSTROMS) OF HOMEOBOX</scope>
</reference>
<reference key="18">
    <citation type="journal article" date="1991" name="Genes Dev.">
        <title>Secondary structure of the homeo domain of yeast alpha 2 repressor determined by NMR spectroscopy.</title>
        <authorList>
            <person name="Phillips C.L."/>
            <person name="Vershon A.K."/>
            <person name="Johnson A.D."/>
            <person name="Dahlquist F.W."/>
        </authorList>
    </citation>
    <scope>STRUCTURE BY NMR OF HOMEOBOX</scope>
</reference>
<reference key="19">
    <citation type="journal article" date="1995" name="Science">
        <title>Crystal structure of the MATa1/MAT alpha 2 homeodomain heterodimer bound to DNA.</title>
        <authorList>
            <person name="Li T."/>
            <person name="Stark M.R."/>
            <person name="Johnson A.D."/>
            <person name="Wolberger C."/>
        </authorList>
    </citation>
    <scope>X-RAY CRYSTALLOGRAPHY (2.5 ANGSTROMS) OF HOMEOBOX IN COMPLEX WITH A1</scope>
    <scope>MUTAGENESIS OF ILE-192; LEU-196; LEU-199 AND LEU-200</scope>
</reference>
<reference key="20">
    <citation type="journal article" date="1998" name="Nature">
        <title>Crystal structure of the yeast MATalpha2/MCM1/DNA ternary complex.</title>
        <authorList>
            <person name="Tan S."/>
            <person name="Richmond T.J."/>
        </authorList>
    </citation>
    <scope>X-RAY CRYSTALLOGRAPHY (2.25 ANGSTROMS) OF HOMEOBOX IN COMPLEX WITH MCM1</scope>
</reference>
<reference key="21">
    <citation type="journal article" date="1998" name="Nucleic Acids Res.">
        <title>Crystal structure of the MATa1/MATalpha2 homeodomain heterodimer in complex with DNA containing an A-tract.</title>
        <authorList>
            <person name="Li T."/>
            <person name="Jin Y."/>
            <person name="Vershon A.K."/>
            <person name="Wolberger C."/>
        </authorList>
    </citation>
    <scope>X-RAY CRYSTALLOGRAPHY (2.5 ANGSTROMS) OF HOMEOBOX IN COMPLEX WITH A1</scope>
</reference>
<reference key="22">
    <citation type="journal article" date="2002" name="Nucleic Acids Res.">
        <title>A Hoogsteen base pair embedded in undistorted B-DNA.</title>
        <authorList>
            <person name="Aishima J."/>
            <person name="Gitti R.K."/>
            <person name="Noah J.E."/>
            <person name="Gan H.H."/>
            <person name="Schlick T."/>
            <person name="Wolberger C."/>
        </authorList>
    </citation>
    <scope>X-RAY CRYSTALLOGRAPHY (2.1 ANGSTROMS) OF HOMEOBOX</scope>
</reference>
<reference key="23">
    <citation type="journal article" date="2002" name="Structure">
        <title>Structural and thermodynamic characterization of the DNA binding properties of a triple alanine mutant of MATalpha2.</title>
        <authorList>
            <person name="Ke A."/>
            <person name="Mathias J.R."/>
            <person name="Vershon A.K."/>
            <person name="Wolberger C."/>
        </authorList>
    </citation>
    <scope>X-RAY CRYSTALLOGRAPHY (2.3 ANGSTROMS) OF HOMEOBOX IN COMPLEX WITH A1</scope>
    <scope>MUTAGENESIS OF SER-181; ASN-182 AND ARG-185</scope>
</reference>
<organism>
    <name type="scientific">Saccharomyces cerevisiae (strain ATCC 204508 / S288c)</name>
    <name type="common">Baker's yeast</name>
    <dbReference type="NCBI Taxonomy" id="559292"/>
    <lineage>
        <taxon>Eukaryota</taxon>
        <taxon>Fungi</taxon>
        <taxon>Dikarya</taxon>
        <taxon>Ascomycota</taxon>
        <taxon>Saccharomycotina</taxon>
        <taxon>Saccharomycetes</taxon>
        <taxon>Saccharomycetales</taxon>
        <taxon>Saccharomycetaceae</taxon>
        <taxon>Saccharomyces</taxon>
    </lineage>
</organism>
<evidence type="ECO:0000255" key="1">
    <source>
        <dbReference type="PROSITE-ProRule" id="PRU00108"/>
    </source>
</evidence>
<evidence type="ECO:0000269" key="2">
    <source>
    </source>
</evidence>
<evidence type="ECO:0000269" key="3">
    <source>
    </source>
</evidence>
<evidence type="ECO:0000269" key="4">
    <source>
    </source>
</evidence>
<evidence type="ECO:0000269" key="5">
    <source>
    </source>
</evidence>
<evidence type="ECO:0000269" key="6">
    <source>
    </source>
</evidence>
<evidence type="ECO:0000269" key="7">
    <source>
    </source>
</evidence>
<evidence type="ECO:0000269" key="8">
    <source>
    </source>
</evidence>
<evidence type="ECO:0000269" key="9">
    <source>
    </source>
</evidence>
<evidence type="ECO:0000269" key="10">
    <source>
    </source>
</evidence>
<evidence type="ECO:0000269" key="11">
    <source>
    </source>
</evidence>
<evidence type="ECO:0000269" key="12">
    <source>
    </source>
</evidence>
<evidence type="ECO:0000269" key="13">
    <source>
    </source>
</evidence>
<evidence type="ECO:0000269" key="14">
    <source>
    </source>
</evidence>
<evidence type="ECO:0000305" key="15"/>
<evidence type="ECO:0007829" key="16">
    <source>
        <dbReference type="PDB" id="1K61"/>
    </source>
</evidence>
<evidence type="ECO:0007829" key="17">
    <source>
        <dbReference type="PDB" id="1LE8"/>
    </source>
</evidence>
<evidence type="ECO:0007829" key="18">
    <source>
        <dbReference type="PDB" id="1MNM"/>
    </source>
</evidence>
<dbReference type="EMBL" id="L00060">
    <property type="protein sequence ID" value="AAA34762.1"/>
    <property type="molecule type" value="Genomic_DNA"/>
</dbReference>
<dbReference type="EMBL" id="X63853">
    <property type="protein sequence ID" value="CAA45335.1"/>
    <property type="molecule type" value="Genomic_DNA"/>
</dbReference>
<dbReference type="EMBL" id="X59720">
    <property type="protein sequence ID" value="CAA42306.1"/>
    <property type="molecule type" value="Genomic_DNA"/>
</dbReference>
<dbReference type="EMBL" id="AY692810">
    <property type="protein sequence ID" value="AAT92829.1"/>
    <property type="molecule type" value="Genomic_DNA"/>
</dbReference>
<dbReference type="EMBL" id="BK006937">
    <property type="protein sequence ID" value="DAA07518.1"/>
    <property type="molecule type" value="Genomic_DNA"/>
</dbReference>
<dbReference type="PIR" id="S19398">
    <property type="entry name" value="JFBYA2"/>
</dbReference>
<dbReference type="RefSeq" id="NP_009868.3">
    <property type="nucleotide sequence ID" value="NM_001178753.1"/>
</dbReference>
<dbReference type="PDB" id="1AKH">
    <property type="method" value="X-ray"/>
    <property type="resolution" value="2.50 A"/>
    <property type="chains" value="B=128-210"/>
</dbReference>
<dbReference type="PDB" id="1APL">
    <property type="method" value="X-ray"/>
    <property type="resolution" value="2.70 A"/>
    <property type="chains" value="C/D=128-210"/>
</dbReference>
<dbReference type="PDB" id="1K61">
    <property type="method" value="X-ray"/>
    <property type="resolution" value="2.10 A"/>
    <property type="chains" value="A/B/C/D=132-191"/>
</dbReference>
<dbReference type="PDB" id="1LE8">
    <property type="method" value="X-ray"/>
    <property type="resolution" value="2.30 A"/>
    <property type="chains" value="B=128-210"/>
</dbReference>
<dbReference type="PDB" id="1MNM">
    <property type="method" value="X-ray"/>
    <property type="resolution" value="2.25 A"/>
    <property type="chains" value="C/D=103-189"/>
</dbReference>
<dbReference type="PDB" id="1YRN">
    <property type="method" value="X-ray"/>
    <property type="resolution" value="2.50 A"/>
    <property type="chains" value="B=128-210"/>
</dbReference>
<dbReference type="PDBsum" id="1AKH"/>
<dbReference type="PDBsum" id="1APL"/>
<dbReference type="PDBsum" id="1K61"/>
<dbReference type="PDBsum" id="1LE8"/>
<dbReference type="PDBsum" id="1MNM"/>
<dbReference type="PDBsum" id="1YRN"/>
<dbReference type="SMR" id="P0CY08"/>
<dbReference type="BioGRID" id="30922">
    <property type="interactions" value="8"/>
</dbReference>
<dbReference type="BioGRID" id="31022">
    <property type="interactions" value="22"/>
</dbReference>
<dbReference type="ComplexPortal" id="CPX-684">
    <property type="entry name" value="Mating-type MATalpha2-MATa1 complex"/>
</dbReference>
<dbReference type="ComplexPortal" id="CPX-692">
    <property type="entry name" value="Mating-type MATalpha2-MCM1 complex"/>
</dbReference>
<dbReference type="FunCoup" id="P0CY08">
    <property type="interactions" value="277"/>
</dbReference>
<dbReference type="IntAct" id="P0CY08">
    <property type="interactions" value="3"/>
</dbReference>
<dbReference type="iPTMnet" id="P0CY08"/>
<dbReference type="PeptideAtlas" id="P0CY08"/>
<dbReference type="EnsemblFungi" id="YCL067C_mRNA">
    <property type="protein sequence ID" value="YCL067C"/>
    <property type="gene ID" value="YCL067C"/>
</dbReference>
<dbReference type="EnsemblFungi" id="YCR039C_mRNA">
    <property type="protein sequence ID" value="YCR039C"/>
    <property type="gene ID" value="YCR039C"/>
</dbReference>
<dbReference type="GeneID" id="850406"/>
<dbReference type="KEGG" id="sce:YCL067C"/>
<dbReference type="KEGG" id="sce:YCR039C"/>
<dbReference type="AGR" id="SGD:S000000635"/>
<dbReference type="SGD" id="S000000635">
    <property type="gene designation" value="MATALPHA2"/>
</dbReference>
<dbReference type="VEuPathDB" id="FungiDB:YCL067C"/>
<dbReference type="VEuPathDB" id="FungiDB:YCR039C"/>
<dbReference type="HOGENOM" id="CLU_091806_1_0_1"/>
<dbReference type="InParanoid" id="P0CY08"/>
<dbReference type="OMA" id="KVQIKNW"/>
<dbReference type="OrthoDB" id="4069986at2759"/>
<dbReference type="BioCyc" id="YEAST:G3O-29351-MONOMER"/>
<dbReference type="BioGRID-ORCS" id="850292">
    <property type="hits" value="0 hits in 3 CRISPR screens"/>
</dbReference>
<dbReference type="EvolutionaryTrace" id="P0CY08"/>
<dbReference type="PRO" id="PR:P0CY08"/>
<dbReference type="Proteomes" id="UP000002311">
    <property type="component" value="Chromosome III"/>
</dbReference>
<dbReference type="RNAct" id="P0CY08">
    <property type="molecule type" value="protein"/>
</dbReference>
<dbReference type="ExpressionAtlas" id="P0CY08">
    <property type="expression patterns" value="baseline"/>
</dbReference>
<dbReference type="GO" id="GO:0005634">
    <property type="term" value="C:nucleus"/>
    <property type="evidence" value="ECO:0000314"/>
    <property type="project" value="SGD"/>
</dbReference>
<dbReference type="GO" id="GO:0090571">
    <property type="term" value="C:RNA polymerase II transcription repressor complex"/>
    <property type="evidence" value="ECO:0000314"/>
    <property type="project" value="ComplexPortal"/>
</dbReference>
<dbReference type="GO" id="GO:0008301">
    <property type="term" value="F:DNA binding, bending"/>
    <property type="evidence" value="ECO:0000314"/>
    <property type="project" value="SGD"/>
</dbReference>
<dbReference type="GO" id="GO:0001227">
    <property type="term" value="F:DNA-binding transcription repressor activity, RNA polymerase II-specific"/>
    <property type="evidence" value="ECO:0000314"/>
    <property type="project" value="SGD"/>
</dbReference>
<dbReference type="GO" id="GO:0043565">
    <property type="term" value="F:sequence-specific DNA binding"/>
    <property type="evidence" value="ECO:0000314"/>
    <property type="project" value="SGD"/>
</dbReference>
<dbReference type="GO" id="GO:0000122">
    <property type="term" value="P:negative regulation of transcription by RNA polymerase II"/>
    <property type="evidence" value="ECO:0000314"/>
    <property type="project" value="SGD"/>
</dbReference>
<dbReference type="GO" id="GO:0007532">
    <property type="term" value="P:regulation of mating-type specific transcription, DNA-templated"/>
    <property type="evidence" value="ECO:0000314"/>
    <property type="project" value="ComplexPortal"/>
</dbReference>
<dbReference type="CDD" id="cd00086">
    <property type="entry name" value="homeodomain"/>
    <property type="match status" value="1"/>
</dbReference>
<dbReference type="DisProt" id="DP02806"/>
<dbReference type="Gene3D" id="1.10.10.60">
    <property type="entry name" value="Homeodomain-like"/>
    <property type="match status" value="1"/>
</dbReference>
<dbReference type="InterPro" id="IPR001356">
    <property type="entry name" value="HD"/>
</dbReference>
<dbReference type="InterPro" id="IPR009057">
    <property type="entry name" value="Homeodomain-like_sf"/>
</dbReference>
<dbReference type="Pfam" id="PF00046">
    <property type="entry name" value="Homeodomain"/>
    <property type="match status" value="1"/>
</dbReference>
<dbReference type="SMART" id="SM00389">
    <property type="entry name" value="HOX"/>
    <property type="match status" value="1"/>
</dbReference>
<dbReference type="SUPFAM" id="SSF46689">
    <property type="entry name" value="Homeodomain-like"/>
    <property type="match status" value="1"/>
</dbReference>
<dbReference type="PROSITE" id="PS50071">
    <property type="entry name" value="HOMEOBOX_2"/>
    <property type="match status" value="1"/>
</dbReference>
<gene>
    <name type="primary">MATALPHA2</name>
    <name type="synonym">ALPHA-2</name>
    <name type="synonym">MAT2A</name>
    <name type="synonym">MATAL2</name>
    <name type="ordered locus">YCR039C</name>
    <name type="ORF">YCR39C</name>
</gene>
<comment type="function">
    <text evidence="12">Mating type proteins are sequence specific DNA-binding proteins that act as master switches in yeast differentiation by controlling gene expression in a cell type-specific fashion. Transcriptional corepressor that binds cooperatively with MCM1 to a 31-basepair DNA sequence termed the a-specific gene (asg) operator, to repress the transcription of a-cell-specific genes. Additionally, in a/alpha diploid cells, binds cooperatively with the A1 protein to a 21-basepair DNA sequence termed the haploid-specific gene (hsg) operator, to repress transcription of haploid-specific genes and of MATALPHA1.</text>
</comment>
<comment type="subunit">
    <text evidence="2 3 8 9 10 11 13 14">Binds DNA with a high specificity as a heterotetramer consisting of an ALPHA2 dimer and an MCM1 dimer. Also binds DNA with a high specificity as a heterodimer of A1 and ALPHA2 in a/alpha diploid cells. Interacts with the general transcription repressor complex SSN6/TUP1.</text>
</comment>
<comment type="interaction">
    <interactant intactId="EBI-10443">
        <id>P0CY08</id>
    </interactant>
    <interactant intactId="EBI-10528">
        <id>P11746</id>
        <label>MCM1</label>
    </interactant>
    <organismsDiffer>false</organismsDiffer>
    <experiments>2</experiments>
</comment>
<comment type="subcellular location">
    <subcellularLocation>
        <location>Nucleus</location>
    </subcellularLocation>
</comment>
<comment type="developmental stage">
    <text>Only present in alpha-cells and in a/alpha diploid cells.</text>
</comment>
<comment type="domain">
    <text evidence="7">The N-terminal domain is required for the interaction with the WD repeats of TUP1 and for dimerization.</text>
</comment>
<comment type="domain">
    <text evidence="7">The homeobox domain binds to DNA and interacts with the TPR repeats of SSN6.</text>
</comment>
<comment type="domain">
    <text evidence="7">The unstructured, flexible linker domain contains eight residues (Leu-114 to Gln-121), which, in the presence of MCM1, adopt a beta-fold and mediate the cooperative interaction to MCM1.</text>
</comment>
<comment type="domain">
    <text evidence="7">The C-terminal tail domain is disordered in the monomer, even when bound to DNA. In the ternary complex with A1 and DNA, 16 residues (Ile-190 to Leu-205) of the C-terminal tail undergo a conformational change, becoming ordered and contacting the A1 homeodomain.</text>
</comment>
<comment type="miscellaneous">
    <text>There are three genetic loci for mating type genes in S.cerevisiae. MAT is the expression locus that determines the mating type of the cell, whereas HML (containing HMLALPHA1 and HMLALPHA2) and HMR (containing HMRA1 and HMRA2) represent silenced repositories of mating type information. The mating type is determined by the MAT locus, which contains either a copy of HML or of HMR. Diploid cells are usually heterozygous for the MAT locus.</text>
</comment>
<comment type="similarity">
    <text evidence="15">Belongs to the TALE/M-ATYP homeobox family.</text>
</comment>